<protein>
    <recommendedName>
        <fullName>Ribonuclease HII</fullName>
        <shortName>RNase HII</shortName>
        <ecNumber>3.1.26.4</ecNumber>
    </recommendedName>
</protein>
<comment type="function">
    <text evidence="1">Endonuclease that specifically degrades the RNA of RNA-DNA hybrids.</text>
</comment>
<comment type="catalytic activity">
    <reaction>
        <text>Endonucleolytic cleavage to 5'-phosphomonoester.</text>
        <dbReference type="EC" id="3.1.26.4"/>
    </reaction>
</comment>
<comment type="cofactor">
    <cofactor evidence="1">
        <name>Mn(2+)</name>
        <dbReference type="ChEBI" id="CHEBI:29035"/>
    </cofactor>
    <cofactor evidence="1">
        <name>Mg(2+)</name>
        <dbReference type="ChEBI" id="CHEBI:18420"/>
    </cofactor>
    <text evidence="1">Manganese or magnesium. Binds 1 divalent metal ion per monomer in the absence of substrate. May bind a second metal ion after substrate binding.</text>
</comment>
<comment type="subcellular location">
    <subcellularLocation>
        <location evidence="3">Cytoplasm</location>
    </subcellularLocation>
</comment>
<comment type="similarity">
    <text evidence="3">Belongs to the RNase HII family.</text>
</comment>
<reference key="1">
    <citation type="journal article" date="2003" name="Mol. Microbiol.">
        <title>An integrated analysis of the genome of the hyperthermophilic archaeon Pyrococcus abyssi.</title>
        <authorList>
            <person name="Cohen G.N."/>
            <person name="Barbe V."/>
            <person name="Flament D."/>
            <person name="Galperin M."/>
            <person name="Heilig R."/>
            <person name="Lecompte O."/>
            <person name="Poch O."/>
            <person name="Prieur D."/>
            <person name="Querellou J."/>
            <person name="Ripp R."/>
            <person name="Thierry J.-C."/>
            <person name="Van der Oost J."/>
            <person name="Weissenbach J."/>
            <person name="Zivanovic Y."/>
            <person name="Forterre P."/>
        </authorList>
    </citation>
    <scope>NUCLEOTIDE SEQUENCE [LARGE SCALE GENOMIC DNA]</scope>
    <source>
        <strain>GE5 / Orsay</strain>
    </source>
</reference>
<reference key="2">
    <citation type="journal article" date="2012" name="Curr. Microbiol.">
        <title>Re-annotation of two hyperthermophilic archaea Pyrococcus abyssi GE5 and Pyrococcus furiosus DSM 3638.</title>
        <authorList>
            <person name="Gao J."/>
            <person name="Wang J."/>
        </authorList>
    </citation>
    <scope>GENOME REANNOTATION</scope>
    <source>
        <strain>GE5 / Orsay</strain>
    </source>
</reference>
<organism>
    <name type="scientific">Pyrococcus abyssi (strain GE5 / Orsay)</name>
    <dbReference type="NCBI Taxonomy" id="272844"/>
    <lineage>
        <taxon>Archaea</taxon>
        <taxon>Methanobacteriati</taxon>
        <taxon>Methanobacteriota</taxon>
        <taxon>Thermococci</taxon>
        <taxon>Thermococcales</taxon>
        <taxon>Thermococcaceae</taxon>
        <taxon>Pyrococcus</taxon>
    </lineage>
</organism>
<proteinExistence type="inferred from homology"/>
<dbReference type="EC" id="3.1.26.4"/>
<dbReference type="EMBL" id="AJ248284">
    <property type="protein sequence ID" value="CAB49440.1"/>
    <property type="molecule type" value="Genomic_DNA"/>
</dbReference>
<dbReference type="EMBL" id="HE613800">
    <property type="protein sequence ID" value="CCE69907.1"/>
    <property type="molecule type" value="Genomic_DNA"/>
</dbReference>
<dbReference type="PIR" id="A75170">
    <property type="entry name" value="A75170"/>
</dbReference>
<dbReference type="RefSeq" id="WP_010867642.1">
    <property type="nucleotide sequence ID" value="NC_000868.1"/>
</dbReference>
<dbReference type="SMR" id="Q9V1A9"/>
<dbReference type="STRING" id="272844.PAB0352"/>
<dbReference type="KEGG" id="pab:PAB0352"/>
<dbReference type="PATRIC" id="fig|272844.11.peg.553"/>
<dbReference type="eggNOG" id="arCOG04121">
    <property type="taxonomic scope" value="Archaea"/>
</dbReference>
<dbReference type="HOGENOM" id="CLU_036532_0_4_2"/>
<dbReference type="OrthoDB" id="33866at2157"/>
<dbReference type="PhylomeDB" id="Q9V1A9"/>
<dbReference type="Proteomes" id="UP000000810">
    <property type="component" value="Chromosome"/>
</dbReference>
<dbReference type="Proteomes" id="UP000009139">
    <property type="component" value="Chromosome"/>
</dbReference>
<dbReference type="GO" id="GO:0005737">
    <property type="term" value="C:cytoplasm"/>
    <property type="evidence" value="ECO:0007669"/>
    <property type="project" value="UniProtKB-SubCell"/>
</dbReference>
<dbReference type="GO" id="GO:0032299">
    <property type="term" value="C:ribonuclease H2 complex"/>
    <property type="evidence" value="ECO:0007669"/>
    <property type="project" value="TreeGrafter"/>
</dbReference>
<dbReference type="GO" id="GO:0030145">
    <property type="term" value="F:manganese ion binding"/>
    <property type="evidence" value="ECO:0007669"/>
    <property type="project" value="UniProtKB-UniRule"/>
</dbReference>
<dbReference type="GO" id="GO:0003723">
    <property type="term" value="F:RNA binding"/>
    <property type="evidence" value="ECO:0007669"/>
    <property type="project" value="InterPro"/>
</dbReference>
<dbReference type="GO" id="GO:0004523">
    <property type="term" value="F:RNA-DNA hybrid ribonuclease activity"/>
    <property type="evidence" value="ECO:0007669"/>
    <property type="project" value="UniProtKB-UniRule"/>
</dbReference>
<dbReference type="GO" id="GO:0043137">
    <property type="term" value="P:DNA replication, removal of RNA primer"/>
    <property type="evidence" value="ECO:0007669"/>
    <property type="project" value="TreeGrafter"/>
</dbReference>
<dbReference type="GO" id="GO:0006298">
    <property type="term" value="P:mismatch repair"/>
    <property type="evidence" value="ECO:0007669"/>
    <property type="project" value="TreeGrafter"/>
</dbReference>
<dbReference type="CDD" id="cd07180">
    <property type="entry name" value="RNase_HII_archaea_like"/>
    <property type="match status" value="1"/>
</dbReference>
<dbReference type="FunFam" id="1.10.10.460:FF:000001">
    <property type="entry name" value="Ribonuclease"/>
    <property type="match status" value="1"/>
</dbReference>
<dbReference type="Gene3D" id="3.30.420.10">
    <property type="entry name" value="Ribonuclease H-like superfamily/Ribonuclease H"/>
    <property type="match status" value="1"/>
</dbReference>
<dbReference type="Gene3D" id="1.10.10.460">
    <property type="entry name" value="Ribonuclease hii. Domain 2"/>
    <property type="match status" value="1"/>
</dbReference>
<dbReference type="HAMAP" id="MF_00052_A">
    <property type="entry name" value="RNase_HII_A"/>
    <property type="match status" value="1"/>
</dbReference>
<dbReference type="InterPro" id="IPR004649">
    <property type="entry name" value="RNase_H2_suA"/>
</dbReference>
<dbReference type="InterPro" id="IPR001352">
    <property type="entry name" value="RNase_HII/HIII"/>
</dbReference>
<dbReference type="InterPro" id="IPR024567">
    <property type="entry name" value="RNase_HII/HIII_dom"/>
</dbReference>
<dbReference type="InterPro" id="IPR020787">
    <property type="entry name" value="RNase_HII_arc"/>
</dbReference>
<dbReference type="InterPro" id="IPR023160">
    <property type="entry name" value="RNase_HII_hlx-loop-hlx_cap_dom"/>
</dbReference>
<dbReference type="InterPro" id="IPR012337">
    <property type="entry name" value="RNaseH-like_sf"/>
</dbReference>
<dbReference type="InterPro" id="IPR036397">
    <property type="entry name" value="RNaseH_sf"/>
</dbReference>
<dbReference type="NCBIfam" id="TIGR00729">
    <property type="entry name" value="ribonuclease HII"/>
    <property type="match status" value="1"/>
</dbReference>
<dbReference type="PANTHER" id="PTHR10954:SF23">
    <property type="entry name" value="RIBONUCLEASE"/>
    <property type="match status" value="1"/>
</dbReference>
<dbReference type="PANTHER" id="PTHR10954">
    <property type="entry name" value="RIBONUCLEASE H2 SUBUNIT A"/>
    <property type="match status" value="1"/>
</dbReference>
<dbReference type="Pfam" id="PF01351">
    <property type="entry name" value="RNase_HII"/>
    <property type="match status" value="1"/>
</dbReference>
<dbReference type="SUPFAM" id="SSF53098">
    <property type="entry name" value="Ribonuclease H-like"/>
    <property type="match status" value="1"/>
</dbReference>
<dbReference type="PROSITE" id="PS51975">
    <property type="entry name" value="RNASE_H_2"/>
    <property type="match status" value="1"/>
</dbReference>
<accession>Q9V1A9</accession>
<accession>G8ZGM8</accession>
<feature type="chain" id="PRO_0000111668" description="Ribonuclease HII">
    <location>
        <begin position="1"/>
        <end position="224"/>
    </location>
</feature>
<feature type="domain" description="RNase H type-2" evidence="2">
    <location>
        <begin position="1"/>
        <end position="210"/>
    </location>
</feature>
<feature type="binding site" evidence="1">
    <location>
        <position position="7"/>
    </location>
    <ligand>
        <name>a divalent metal cation</name>
        <dbReference type="ChEBI" id="CHEBI:60240"/>
    </ligand>
</feature>
<feature type="binding site" evidence="1">
    <location>
        <position position="8"/>
    </location>
    <ligand>
        <name>a divalent metal cation</name>
        <dbReference type="ChEBI" id="CHEBI:60240"/>
    </ligand>
</feature>
<feature type="binding site" evidence="1">
    <location>
        <position position="105"/>
    </location>
    <ligand>
        <name>a divalent metal cation</name>
        <dbReference type="ChEBI" id="CHEBI:60240"/>
    </ligand>
</feature>
<sequence>MKVAGADEAGRGPVIGPLVIVAAVVEEDKIRSLTKLGVKDSKQLTPAQREKLFDEIVKVLDDYSVVIVSPQDIDGRKGSMNELEVENFVKALNSLKVKPEVIYIDSADVKAERFAENIRSRLAYEAKVVAEHKADAKYEIVSAASILAKVIRDREIEKLKAEYGDFGSGYPSDPRTKKWLEEWYSKHGNFPPIVRRTWDTAKKIEEKFKRAQLTLDNFLKRFRN</sequence>
<name>RNH2_PYRAB</name>
<gene>
    <name type="primary">rnhB</name>
    <name type="ordered locus">PYRAB05180</name>
    <name type="ORF">PAB0352</name>
</gene>
<evidence type="ECO:0000250" key="1"/>
<evidence type="ECO:0000255" key="2">
    <source>
        <dbReference type="PROSITE-ProRule" id="PRU01319"/>
    </source>
</evidence>
<evidence type="ECO:0000305" key="3"/>
<keyword id="KW-0963">Cytoplasm</keyword>
<keyword id="KW-0255">Endonuclease</keyword>
<keyword id="KW-0378">Hydrolase</keyword>
<keyword id="KW-0464">Manganese</keyword>
<keyword id="KW-0479">Metal-binding</keyword>
<keyword id="KW-0540">Nuclease</keyword>